<sequence length="387" mass="41807">MLHTTPSGLLIIDKPQGVTSFDAVAAVRGALHIKKVGHAGTLDPMATGTLVIAFGHATRLLNAIVAHDKTYEATIRLGLRTTTDDAEGEVLVDDEARSRWQTLSAQLTEGGQSGEPTALPTASWQDLLTRTIATNFTGDIEQVPNTFSAIKINGQRAYDLAREGKDVELKPRPVTISEFTVLDIRSGFVAGEQTAEPLREDANTGAIPALDVDVRISCSSGTYIRALARDLGKELGVGGYLTRLRRTRVGRFALPDDASGLIAPEAMLDTRTHTVTAHTDQKTFTNREGQTVTRNKCVLDTPEGLAGDERRNWLLDHALTMEQAARGAMPALDITPEEASELRFGRRIERTISEPTAAIVPQTHDVAAIIERANAHQAKPVTVFPLA</sequence>
<dbReference type="EC" id="5.4.99.25" evidence="1"/>
<dbReference type="EMBL" id="CP000605">
    <property type="protein sequence ID" value="ACD99190.1"/>
    <property type="molecule type" value="Genomic_DNA"/>
</dbReference>
<dbReference type="RefSeq" id="WP_007053815.1">
    <property type="nucleotide sequence ID" value="NZ_AABM02000016.1"/>
</dbReference>
<dbReference type="SMR" id="B3DQF2"/>
<dbReference type="KEGG" id="blj:BLD_1745"/>
<dbReference type="HOGENOM" id="CLU_032087_0_0_11"/>
<dbReference type="Proteomes" id="UP000002419">
    <property type="component" value="Chromosome"/>
</dbReference>
<dbReference type="GO" id="GO:0003723">
    <property type="term" value="F:RNA binding"/>
    <property type="evidence" value="ECO:0007669"/>
    <property type="project" value="InterPro"/>
</dbReference>
<dbReference type="GO" id="GO:0160148">
    <property type="term" value="F:tRNA pseudouridine(55) synthase activity"/>
    <property type="evidence" value="ECO:0007669"/>
    <property type="project" value="UniProtKB-EC"/>
</dbReference>
<dbReference type="GO" id="GO:1990481">
    <property type="term" value="P:mRNA pseudouridine synthesis"/>
    <property type="evidence" value="ECO:0007669"/>
    <property type="project" value="TreeGrafter"/>
</dbReference>
<dbReference type="GO" id="GO:0031119">
    <property type="term" value="P:tRNA pseudouridine synthesis"/>
    <property type="evidence" value="ECO:0007669"/>
    <property type="project" value="UniProtKB-UniRule"/>
</dbReference>
<dbReference type="CDD" id="cd02573">
    <property type="entry name" value="PseudoU_synth_EcTruB"/>
    <property type="match status" value="1"/>
</dbReference>
<dbReference type="Gene3D" id="3.30.2350.10">
    <property type="entry name" value="Pseudouridine synthase"/>
    <property type="match status" value="1"/>
</dbReference>
<dbReference type="Gene3D" id="2.30.130.10">
    <property type="entry name" value="PUA domain"/>
    <property type="match status" value="1"/>
</dbReference>
<dbReference type="HAMAP" id="MF_01080">
    <property type="entry name" value="TruB_bact"/>
    <property type="match status" value="1"/>
</dbReference>
<dbReference type="InterPro" id="IPR020103">
    <property type="entry name" value="PsdUridine_synth_cat_dom_sf"/>
</dbReference>
<dbReference type="InterPro" id="IPR002501">
    <property type="entry name" value="PsdUridine_synth_N"/>
</dbReference>
<dbReference type="InterPro" id="IPR036974">
    <property type="entry name" value="PUA_sf"/>
</dbReference>
<dbReference type="InterPro" id="IPR015225">
    <property type="entry name" value="tRNA_psdUridine_synth_fam2_C"/>
</dbReference>
<dbReference type="InterPro" id="IPR014780">
    <property type="entry name" value="tRNA_psdUridine_synth_TruB"/>
</dbReference>
<dbReference type="InterPro" id="IPR032819">
    <property type="entry name" value="TruB_C"/>
</dbReference>
<dbReference type="PANTHER" id="PTHR13767:SF2">
    <property type="entry name" value="PSEUDOURIDYLATE SYNTHASE TRUB1"/>
    <property type="match status" value="1"/>
</dbReference>
<dbReference type="PANTHER" id="PTHR13767">
    <property type="entry name" value="TRNA-PSEUDOURIDINE SYNTHASE"/>
    <property type="match status" value="1"/>
</dbReference>
<dbReference type="Pfam" id="PF09142">
    <property type="entry name" value="TruB_C"/>
    <property type="match status" value="1"/>
</dbReference>
<dbReference type="Pfam" id="PF16198">
    <property type="entry name" value="TruB_C_2"/>
    <property type="match status" value="1"/>
</dbReference>
<dbReference type="Pfam" id="PF01509">
    <property type="entry name" value="TruB_N"/>
    <property type="match status" value="2"/>
</dbReference>
<dbReference type="SUPFAM" id="SSF55120">
    <property type="entry name" value="Pseudouridine synthase"/>
    <property type="match status" value="1"/>
</dbReference>
<accession>B3DQF2</accession>
<name>TRUB_BIFLD</name>
<feature type="chain" id="PRO_1000136808" description="tRNA pseudouridine synthase B">
    <location>
        <begin position="1"/>
        <end position="387"/>
    </location>
</feature>
<feature type="active site" description="Nucleophile" evidence="1">
    <location>
        <position position="43"/>
    </location>
</feature>
<reference key="1">
    <citation type="journal article" date="2008" name="BMC Genomics">
        <title>Comparative genomic analysis of the gut bacterium Bifidobacterium longum reveals loci susceptible to deletion during pure culture growth.</title>
        <authorList>
            <person name="Lee J.H."/>
            <person name="Karamychev V.N."/>
            <person name="Kozyavkin S.A."/>
            <person name="Mills D."/>
            <person name="Pavlov A.R."/>
            <person name="Pavlova N.V."/>
            <person name="Polouchine N.N."/>
            <person name="Richardson P.M."/>
            <person name="Shakhova V.V."/>
            <person name="Slesarev A.I."/>
            <person name="Weimer B."/>
            <person name="O'Sullivan D.J."/>
        </authorList>
    </citation>
    <scope>NUCLEOTIDE SEQUENCE [LARGE SCALE GENOMIC DNA]</scope>
    <source>
        <strain>DJO10A</strain>
    </source>
</reference>
<organism>
    <name type="scientific">Bifidobacterium longum (strain DJO10A)</name>
    <dbReference type="NCBI Taxonomy" id="205913"/>
    <lineage>
        <taxon>Bacteria</taxon>
        <taxon>Bacillati</taxon>
        <taxon>Actinomycetota</taxon>
        <taxon>Actinomycetes</taxon>
        <taxon>Bifidobacteriales</taxon>
        <taxon>Bifidobacteriaceae</taxon>
        <taxon>Bifidobacterium</taxon>
    </lineage>
</organism>
<keyword id="KW-0413">Isomerase</keyword>
<keyword id="KW-0819">tRNA processing</keyword>
<gene>
    <name evidence="1" type="primary">truB</name>
    <name type="ordered locus">BLD_1745</name>
</gene>
<protein>
    <recommendedName>
        <fullName evidence="1">tRNA pseudouridine synthase B</fullName>
        <ecNumber evidence="1">5.4.99.25</ecNumber>
    </recommendedName>
    <alternativeName>
        <fullName evidence="1">tRNA pseudouridine(55) synthase</fullName>
        <shortName evidence="1">Psi55 synthase</shortName>
    </alternativeName>
    <alternativeName>
        <fullName evidence="1">tRNA pseudouridylate synthase</fullName>
    </alternativeName>
    <alternativeName>
        <fullName evidence="1">tRNA-uridine isomerase</fullName>
    </alternativeName>
</protein>
<evidence type="ECO:0000255" key="1">
    <source>
        <dbReference type="HAMAP-Rule" id="MF_01080"/>
    </source>
</evidence>
<comment type="function">
    <text evidence="1">Responsible for synthesis of pseudouridine from uracil-55 in the psi GC loop of transfer RNAs.</text>
</comment>
<comment type="catalytic activity">
    <reaction evidence="1">
        <text>uridine(55) in tRNA = pseudouridine(55) in tRNA</text>
        <dbReference type="Rhea" id="RHEA:42532"/>
        <dbReference type="Rhea" id="RHEA-COMP:10101"/>
        <dbReference type="Rhea" id="RHEA-COMP:10102"/>
        <dbReference type="ChEBI" id="CHEBI:65314"/>
        <dbReference type="ChEBI" id="CHEBI:65315"/>
        <dbReference type="EC" id="5.4.99.25"/>
    </reaction>
</comment>
<comment type="similarity">
    <text evidence="1">Belongs to the pseudouridine synthase TruB family. Type 1 subfamily.</text>
</comment>
<proteinExistence type="inferred from homology"/>